<comment type="function">
    <text>Catalyzes the conversion of caffeic acid to ferulic acid and of 5-hydroxyferulic acid to sinapic acid. The resulting products may subsequently be converted to the corresponding alcohols that are incorporated into lignins.</text>
</comment>
<comment type="catalytic activity">
    <reaction>
        <text>(E)-caffeate + S-adenosyl-L-methionine = (E)-ferulate + S-adenosyl-L-homocysteine + H(+)</text>
        <dbReference type="Rhea" id="RHEA:20225"/>
        <dbReference type="ChEBI" id="CHEBI:15378"/>
        <dbReference type="ChEBI" id="CHEBI:29749"/>
        <dbReference type="ChEBI" id="CHEBI:57770"/>
        <dbReference type="ChEBI" id="CHEBI:57856"/>
        <dbReference type="ChEBI" id="CHEBI:59789"/>
        <dbReference type="EC" id="2.1.1.68"/>
    </reaction>
</comment>
<comment type="pathway">
    <text>Aromatic compound metabolism; phenylpropanoid biosynthesis.</text>
</comment>
<comment type="subunit">
    <text evidence="1">Homodimer.</text>
</comment>
<comment type="tissue specificity">
    <text>Xylem.</text>
</comment>
<comment type="PTM">
    <text>The N-terminus is blocked.</text>
</comment>
<comment type="similarity">
    <text evidence="2">Belongs to the class I-like SAM-binding methyltransferase superfamily. Cation-independent O-methyltransferase family. COMT subfamily.</text>
</comment>
<dbReference type="EC" id="2.1.1.68"/>
<dbReference type="EMBL" id="X62096">
    <property type="protein sequence ID" value="CAA44006.1"/>
    <property type="molecule type" value="mRNA"/>
</dbReference>
<dbReference type="EMBL" id="U13171">
    <property type="protein sequence ID" value="AAB61731.1"/>
    <property type="molecule type" value="Genomic_DNA"/>
</dbReference>
<dbReference type="PIR" id="S18568">
    <property type="entry name" value="S18568"/>
</dbReference>
<dbReference type="SMR" id="Q00763"/>
<dbReference type="UniPathway" id="UPA00711"/>
<dbReference type="GO" id="GO:0047763">
    <property type="term" value="F:caffeate O-methyltransferase activity"/>
    <property type="evidence" value="ECO:0007669"/>
    <property type="project" value="UniProtKB-EC"/>
</dbReference>
<dbReference type="GO" id="GO:0046983">
    <property type="term" value="F:protein dimerization activity"/>
    <property type="evidence" value="ECO:0007669"/>
    <property type="project" value="InterPro"/>
</dbReference>
<dbReference type="GO" id="GO:0009809">
    <property type="term" value="P:lignin biosynthetic process"/>
    <property type="evidence" value="ECO:0007669"/>
    <property type="project" value="UniProtKB-KW"/>
</dbReference>
<dbReference type="GO" id="GO:0032259">
    <property type="term" value="P:methylation"/>
    <property type="evidence" value="ECO:0007669"/>
    <property type="project" value="UniProtKB-KW"/>
</dbReference>
<dbReference type="CDD" id="cd02440">
    <property type="entry name" value="AdoMet_MTases"/>
    <property type="match status" value="1"/>
</dbReference>
<dbReference type="FunFam" id="1.10.10.10:FF:000357">
    <property type="entry name" value="Caffeic acid 3-O-methyltransferase"/>
    <property type="match status" value="1"/>
</dbReference>
<dbReference type="FunFam" id="3.40.50.150:FF:000061">
    <property type="entry name" value="Caffeic acid O-methyltransferase"/>
    <property type="match status" value="1"/>
</dbReference>
<dbReference type="Gene3D" id="3.40.50.150">
    <property type="entry name" value="Vaccinia Virus protein VP39"/>
    <property type="match status" value="1"/>
</dbReference>
<dbReference type="Gene3D" id="1.10.10.10">
    <property type="entry name" value="Winged helix-like DNA-binding domain superfamily/Winged helix DNA-binding domain"/>
    <property type="match status" value="1"/>
</dbReference>
<dbReference type="InterPro" id="IPR016461">
    <property type="entry name" value="COMT-like"/>
</dbReference>
<dbReference type="InterPro" id="IPR001077">
    <property type="entry name" value="O_MeTrfase_dom"/>
</dbReference>
<dbReference type="InterPro" id="IPR012967">
    <property type="entry name" value="Plant_O-MeTrfase_dimerisation"/>
</dbReference>
<dbReference type="InterPro" id="IPR029063">
    <property type="entry name" value="SAM-dependent_MTases_sf"/>
</dbReference>
<dbReference type="InterPro" id="IPR036388">
    <property type="entry name" value="WH-like_DNA-bd_sf"/>
</dbReference>
<dbReference type="InterPro" id="IPR036390">
    <property type="entry name" value="WH_DNA-bd_sf"/>
</dbReference>
<dbReference type="PANTHER" id="PTHR11746">
    <property type="entry name" value="O-METHYLTRANSFERASE"/>
    <property type="match status" value="1"/>
</dbReference>
<dbReference type="Pfam" id="PF08100">
    <property type="entry name" value="Dimerisation"/>
    <property type="match status" value="1"/>
</dbReference>
<dbReference type="Pfam" id="PF00891">
    <property type="entry name" value="Methyltransf_2"/>
    <property type="match status" value="1"/>
</dbReference>
<dbReference type="PIRSF" id="PIRSF005739">
    <property type="entry name" value="O-mtase"/>
    <property type="match status" value="1"/>
</dbReference>
<dbReference type="SUPFAM" id="SSF53335">
    <property type="entry name" value="S-adenosyl-L-methionine-dependent methyltransferases"/>
    <property type="match status" value="1"/>
</dbReference>
<dbReference type="SUPFAM" id="SSF46785">
    <property type="entry name" value="Winged helix' DNA-binding domain"/>
    <property type="match status" value="1"/>
</dbReference>
<dbReference type="PROSITE" id="PS51683">
    <property type="entry name" value="SAM_OMT_II"/>
    <property type="match status" value="1"/>
</dbReference>
<name>COMT1_POPTM</name>
<reference key="1">
    <citation type="journal article" date="1991" name="Plant Mol. Biol.">
        <title>cDNA cloning, sequence analysis and seasonal expression of lignin-bispecific caffeic acid/5-hydroxyferulic acid O-methyltransferase of aspen.</title>
        <authorList>
            <person name="Bugos R.C."/>
            <person name="Chiang V.L.C."/>
            <person name="Campbell W.H."/>
        </authorList>
    </citation>
    <scope>NUCLEOTIDE SEQUENCE [MRNA]</scope>
    <scope>PROTEIN SEQUENCE OF 165-184; 335-346 AND 349-359</scope>
    <source>
        <tissue>Xylem</tissue>
    </source>
</reference>
<reference key="2">
    <citation type="journal article" date="1995" name="Plant Physiol.">
        <title>Nucleotide sequence of a Populus tremuloides gene encoding bispecific caffeic acid/5-hydroxyferulic acid O-methyltransferase.</title>
        <authorList>
            <person name="Tsai C.-J."/>
            <person name="Podila G.K."/>
            <person name="Chiang V.L.C."/>
        </authorList>
    </citation>
    <scope>NUCLEOTIDE SEQUENCE [GENOMIC DNA]</scope>
</reference>
<reference key="3">
    <citation type="submission" date="1997-07" db="EMBL/GenBank/DDBJ databases">
        <authorList>
            <person name="Tsai C.-J."/>
            <person name="Mielke M.R."/>
            <person name="Podila G.K."/>
            <person name="Chiang V.L.C."/>
        </authorList>
    </citation>
    <scope>SEQUENCE REVISION</scope>
</reference>
<reference key="4">
    <citation type="journal article" date="1992" name="Phytochemistry">
        <title>Characterization of bispecific caffeic acid/5-hydroxyferulic acid O-methyltransferase from aspen.</title>
        <authorList>
            <person name="Bugos R.C."/>
            <person name="Chiang V.L."/>
            <person name="Campbell W.H."/>
        </authorList>
    </citation>
    <scope>PROTEIN SEQUENCE OF 165-184; 335-346 AND 349-359</scope>
    <source>
        <tissue>Xylem</tissue>
    </source>
</reference>
<gene>
    <name type="primary">OMT1</name>
</gene>
<organism>
    <name type="scientific">Populus tremuloides</name>
    <name type="common">Quaking aspen</name>
    <dbReference type="NCBI Taxonomy" id="3693"/>
    <lineage>
        <taxon>Eukaryota</taxon>
        <taxon>Viridiplantae</taxon>
        <taxon>Streptophyta</taxon>
        <taxon>Embryophyta</taxon>
        <taxon>Tracheophyta</taxon>
        <taxon>Spermatophyta</taxon>
        <taxon>Magnoliopsida</taxon>
        <taxon>eudicotyledons</taxon>
        <taxon>Gunneridae</taxon>
        <taxon>Pentapetalae</taxon>
        <taxon>rosids</taxon>
        <taxon>fabids</taxon>
        <taxon>Malpighiales</taxon>
        <taxon>Salicaceae</taxon>
        <taxon>Saliceae</taxon>
        <taxon>Populus</taxon>
    </lineage>
</organism>
<accession>Q00763</accession>
<accession>Q43094</accession>
<protein>
    <recommendedName>
        <fullName>Caffeic acid 3-O-methyltransferase 1</fullName>
        <shortName>CAOMT-1</shortName>
        <shortName>COMT-1</shortName>
        <ecNumber>2.1.1.68</ecNumber>
    </recommendedName>
    <alternativeName>
        <fullName>S-adenosysl-L-methionine:caffeic acid 3-O-methyltransferase 1</fullName>
    </alternativeName>
</protein>
<keyword id="KW-0903">Direct protein sequencing</keyword>
<keyword id="KW-0438">Lignin biosynthesis</keyword>
<keyword id="KW-0489">Methyltransferase</keyword>
<keyword id="KW-0949">S-adenosyl-L-methionine</keyword>
<keyword id="KW-0808">Transferase</keyword>
<evidence type="ECO:0000250" key="1"/>
<evidence type="ECO:0000255" key="2">
    <source>
        <dbReference type="PROSITE-ProRule" id="PRU01020"/>
    </source>
</evidence>
<feature type="chain" id="PRO_0000063209" description="Caffeic acid 3-O-methyltransferase 1">
    <location>
        <begin position="1"/>
        <end position="365"/>
    </location>
</feature>
<feature type="region of interest" description="Substrate binding" evidence="1">
    <location>
        <begin position="162"/>
        <end position="180"/>
    </location>
</feature>
<feature type="active site" description="Proton acceptor" evidence="2">
    <location>
        <position position="269"/>
    </location>
</feature>
<feature type="binding site" evidence="1">
    <location>
        <begin position="130"/>
        <end position="136"/>
    </location>
    <ligand>
        <name>substrate</name>
    </ligand>
</feature>
<feature type="binding site" evidence="2">
    <location>
        <position position="208"/>
    </location>
    <ligand>
        <name>S-adenosyl-L-methionine</name>
        <dbReference type="ChEBI" id="CHEBI:59789"/>
    </ligand>
</feature>
<feature type="binding site" evidence="2">
    <location>
        <position position="231"/>
    </location>
    <ligand>
        <name>S-adenosyl-L-methionine</name>
        <dbReference type="ChEBI" id="CHEBI:59789"/>
    </ligand>
</feature>
<feature type="binding site" evidence="2">
    <location>
        <position position="251"/>
    </location>
    <ligand>
        <name>S-adenosyl-L-methionine</name>
        <dbReference type="ChEBI" id="CHEBI:59789"/>
    </ligand>
</feature>
<feature type="binding site" evidence="2">
    <location>
        <position position="252"/>
    </location>
    <ligand>
        <name>S-adenosyl-L-methionine</name>
        <dbReference type="ChEBI" id="CHEBI:59789"/>
    </ligand>
</feature>
<feature type="binding site" evidence="2">
    <location>
        <position position="265"/>
    </location>
    <ligand>
        <name>S-adenosyl-L-methionine</name>
        <dbReference type="ChEBI" id="CHEBI:59789"/>
    </ligand>
</feature>
<sequence>MGSTGETQMTPTQVSDEEAHLFAMQLASASVLPMILKTAIELDLLEIMAKAGPGAFLSTSEIASHLPTKNPDAPVMLDRILRLLASYSILTCSLKDLPDGKVERLYGLAPVCKFLTKNEDGVSVSPLCLMNQDKVLMESWYYLKDAILDGGIPFNKAYGMTAFEYHGTDPRFNKVFNKGMSDHSTITMKKILETYKGFEGLTSLVDVGGGTGAVVNTIVSKYPSIKGINFDLPHVIEDAPSYPGVEHVGGDMFVSVPKADAVFMKWICHDWSDAHCLKFLKNCYDALPENGKVILVECILPVAPDTSLATKGVVHVDVIMLAHNPGGKERTEKEFEGLAKGAGFQGFEVMCCAFNTHVIEFRKKA</sequence>
<proteinExistence type="evidence at protein level"/>